<feature type="chain" id="PRO_0000112328" description="Carbamoyl phosphate synthase small chain">
    <location>
        <begin position="1"/>
        <end position="380"/>
    </location>
</feature>
<feature type="domain" description="Glutamine amidotransferase type-1" evidence="1">
    <location>
        <begin position="188"/>
        <end position="380"/>
    </location>
</feature>
<feature type="region of interest" description="CPSase" evidence="1">
    <location>
        <begin position="1"/>
        <end position="184"/>
    </location>
</feature>
<feature type="active site" description="Nucleophile" evidence="1">
    <location>
        <position position="264"/>
    </location>
</feature>
<feature type="active site" evidence="1">
    <location>
        <position position="354"/>
    </location>
</feature>
<feature type="active site" evidence="1">
    <location>
        <position position="356"/>
    </location>
</feature>
<feature type="binding site" evidence="1">
    <location>
        <position position="55"/>
    </location>
    <ligand>
        <name>L-glutamine</name>
        <dbReference type="ChEBI" id="CHEBI:58359"/>
    </ligand>
</feature>
<feature type="binding site" evidence="1">
    <location>
        <position position="236"/>
    </location>
    <ligand>
        <name>L-glutamine</name>
        <dbReference type="ChEBI" id="CHEBI:58359"/>
    </ligand>
</feature>
<feature type="binding site" evidence="1">
    <location>
        <position position="238"/>
    </location>
    <ligand>
        <name>L-glutamine</name>
        <dbReference type="ChEBI" id="CHEBI:58359"/>
    </ligand>
</feature>
<feature type="binding site" evidence="1">
    <location>
        <position position="265"/>
    </location>
    <ligand>
        <name>L-glutamine</name>
        <dbReference type="ChEBI" id="CHEBI:58359"/>
    </ligand>
</feature>
<feature type="binding site" evidence="1">
    <location>
        <position position="268"/>
    </location>
    <ligand>
        <name>L-glutamine</name>
        <dbReference type="ChEBI" id="CHEBI:58359"/>
    </ligand>
</feature>
<feature type="binding site" evidence="1">
    <location>
        <position position="306"/>
    </location>
    <ligand>
        <name>L-glutamine</name>
        <dbReference type="ChEBI" id="CHEBI:58359"/>
    </ligand>
</feature>
<feature type="binding site" evidence="1">
    <location>
        <position position="308"/>
    </location>
    <ligand>
        <name>L-glutamine</name>
        <dbReference type="ChEBI" id="CHEBI:58359"/>
    </ligand>
</feature>
<feature type="binding site" evidence="1">
    <location>
        <position position="309"/>
    </location>
    <ligand>
        <name>L-glutamine</name>
        <dbReference type="ChEBI" id="CHEBI:58359"/>
    </ligand>
</feature>
<accession>Q9KXR5</accession>
<dbReference type="EC" id="6.3.5.5" evidence="1"/>
<dbReference type="EMBL" id="AL939109">
    <property type="protein sequence ID" value="CAB93364.1"/>
    <property type="molecule type" value="Genomic_DNA"/>
</dbReference>
<dbReference type="RefSeq" id="NP_625764.1">
    <property type="nucleotide sequence ID" value="NC_003888.3"/>
</dbReference>
<dbReference type="RefSeq" id="WP_011027810.1">
    <property type="nucleotide sequence ID" value="NZ_VNID01000021.1"/>
</dbReference>
<dbReference type="SMR" id="Q9KXR5"/>
<dbReference type="FunCoup" id="Q9KXR5">
    <property type="interactions" value="389"/>
</dbReference>
<dbReference type="STRING" id="100226.gene:17759070"/>
<dbReference type="PaxDb" id="100226-SCO1484"/>
<dbReference type="KEGG" id="sco:SCO1484"/>
<dbReference type="PATRIC" id="fig|100226.15.peg.1493"/>
<dbReference type="eggNOG" id="COG0505">
    <property type="taxonomic scope" value="Bacteria"/>
</dbReference>
<dbReference type="HOGENOM" id="CLU_035901_2_1_11"/>
<dbReference type="InParanoid" id="Q9KXR5"/>
<dbReference type="OrthoDB" id="9804328at2"/>
<dbReference type="PhylomeDB" id="Q9KXR5"/>
<dbReference type="UniPathway" id="UPA00068">
    <property type="reaction ID" value="UER00171"/>
</dbReference>
<dbReference type="UniPathway" id="UPA00070">
    <property type="reaction ID" value="UER00115"/>
</dbReference>
<dbReference type="Proteomes" id="UP000001973">
    <property type="component" value="Chromosome"/>
</dbReference>
<dbReference type="GO" id="GO:0005951">
    <property type="term" value="C:carbamoyl-phosphate synthase complex"/>
    <property type="evidence" value="ECO:0000318"/>
    <property type="project" value="GO_Central"/>
</dbReference>
<dbReference type="GO" id="GO:0005737">
    <property type="term" value="C:cytoplasm"/>
    <property type="evidence" value="ECO:0000318"/>
    <property type="project" value="GO_Central"/>
</dbReference>
<dbReference type="GO" id="GO:0005524">
    <property type="term" value="F:ATP binding"/>
    <property type="evidence" value="ECO:0007669"/>
    <property type="project" value="UniProtKB-UniRule"/>
</dbReference>
<dbReference type="GO" id="GO:0004088">
    <property type="term" value="F:carbamoyl-phosphate synthase (glutamine-hydrolyzing) activity"/>
    <property type="evidence" value="ECO:0007669"/>
    <property type="project" value="UniProtKB-UniRule"/>
</dbReference>
<dbReference type="GO" id="GO:0004359">
    <property type="term" value="F:glutaminase activity"/>
    <property type="evidence" value="ECO:0007669"/>
    <property type="project" value="RHEA"/>
</dbReference>
<dbReference type="GO" id="GO:0006207">
    <property type="term" value="P:'de novo' pyrimidine nucleobase biosynthetic process"/>
    <property type="evidence" value="ECO:0007669"/>
    <property type="project" value="InterPro"/>
</dbReference>
<dbReference type="GO" id="GO:0044205">
    <property type="term" value="P:'de novo' UMP biosynthetic process"/>
    <property type="evidence" value="ECO:0007669"/>
    <property type="project" value="UniProtKB-UniRule"/>
</dbReference>
<dbReference type="GO" id="GO:0006541">
    <property type="term" value="P:glutamine metabolic process"/>
    <property type="evidence" value="ECO:0007669"/>
    <property type="project" value="InterPro"/>
</dbReference>
<dbReference type="GO" id="GO:0006526">
    <property type="term" value="P:L-arginine biosynthetic process"/>
    <property type="evidence" value="ECO:0000318"/>
    <property type="project" value="GO_Central"/>
</dbReference>
<dbReference type="CDD" id="cd01744">
    <property type="entry name" value="GATase1_CPSase"/>
    <property type="match status" value="1"/>
</dbReference>
<dbReference type="FunFam" id="3.40.50.880:FF:000018">
    <property type="entry name" value="Carbamoyl-phosphate synthase small chain"/>
    <property type="match status" value="1"/>
</dbReference>
<dbReference type="FunFam" id="3.50.30.20:FF:000001">
    <property type="entry name" value="Carbamoyl-phosphate synthase small chain"/>
    <property type="match status" value="1"/>
</dbReference>
<dbReference type="Gene3D" id="3.40.50.880">
    <property type="match status" value="1"/>
</dbReference>
<dbReference type="Gene3D" id="3.50.30.20">
    <property type="entry name" value="Carbamoyl-phosphate synthase small subunit, N-terminal domain"/>
    <property type="match status" value="1"/>
</dbReference>
<dbReference type="HAMAP" id="MF_01209">
    <property type="entry name" value="CPSase_S_chain"/>
    <property type="match status" value="1"/>
</dbReference>
<dbReference type="InterPro" id="IPR050472">
    <property type="entry name" value="Anth_synth/Amidotransfase"/>
</dbReference>
<dbReference type="InterPro" id="IPR006274">
    <property type="entry name" value="CarbamoylP_synth_ssu"/>
</dbReference>
<dbReference type="InterPro" id="IPR002474">
    <property type="entry name" value="CarbamoylP_synth_ssu_N"/>
</dbReference>
<dbReference type="InterPro" id="IPR036480">
    <property type="entry name" value="CarbP_synth_ssu_N_sf"/>
</dbReference>
<dbReference type="InterPro" id="IPR029062">
    <property type="entry name" value="Class_I_gatase-like"/>
</dbReference>
<dbReference type="InterPro" id="IPR035686">
    <property type="entry name" value="CPSase_GATase1"/>
</dbReference>
<dbReference type="InterPro" id="IPR017926">
    <property type="entry name" value="GATASE"/>
</dbReference>
<dbReference type="NCBIfam" id="TIGR01368">
    <property type="entry name" value="CPSaseIIsmall"/>
    <property type="match status" value="1"/>
</dbReference>
<dbReference type="NCBIfam" id="NF009475">
    <property type="entry name" value="PRK12838.1"/>
    <property type="match status" value="1"/>
</dbReference>
<dbReference type="PANTHER" id="PTHR43418:SF7">
    <property type="entry name" value="CARBAMOYL-PHOSPHATE SYNTHASE SMALL CHAIN"/>
    <property type="match status" value="1"/>
</dbReference>
<dbReference type="PANTHER" id="PTHR43418">
    <property type="entry name" value="MULTIFUNCTIONAL TRYPTOPHAN BIOSYNTHESIS PROTEIN-RELATED"/>
    <property type="match status" value="1"/>
</dbReference>
<dbReference type="Pfam" id="PF00988">
    <property type="entry name" value="CPSase_sm_chain"/>
    <property type="match status" value="1"/>
</dbReference>
<dbReference type="Pfam" id="PF00117">
    <property type="entry name" value="GATase"/>
    <property type="match status" value="1"/>
</dbReference>
<dbReference type="PRINTS" id="PR00097">
    <property type="entry name" value="ANTSNTHASEII"/>
</dbReference>
<dbReference type="PRINTS" id="PR00099">
    <property type="entry name" value="CPSGATASE"/>
</dbReference>
<dbReference type="PRINTS" id="PR00096">
    <property type="entry name" value="GATASE"/>
</dbReference>
<dbReference type="SMART" id="SM01097">
    <property type="entry name" value="CPSase_sm_chain"/>
    <property type="match status" value="1"/>
</dbReference>
<dbReference type="SUPFAM" id="SSF52021">
    <property type="entry name" value="Carbamoyl phosphate synthetase, small subunit N-terminal domain"/>
    <property type="match status" value="1"/>
</dbReference>
<dbReference type="SUPFAM" id="SSF52317">
    <property type="entry name" value="Class I glutamine amidotransferase-like"/>
    <property type="match status" value="1"/>
</dbReference>
<dbReference type="PROSITE" id="PS51273">
    <property type="entry name" value="GATASE_TYPE_1"/>
    <property type="match status" value="1"/>
</dbReference>
<comment type="function">
    <text evidence="1">Small subunit of the glutamine-dependent carbamoyl phosphate synthetase (CPSase). CPSase catalyzes the formation of carbamoyl phosphate from the ammonia moiety of glutamine, carbonate, and phosphate donated by ATP, constituting the first step of 2 biosynthetic pathways, one leading to arginine and/or urea and the other to pyrimidine nucleotides. The small subunit (glutamine amidotransferase) binds and cleaves glutamine to supply the large subunit with the substrate ammonia.</text>
</comment>
<comment type="catalytic activity">
    <reaction evidence="1">
        <text>hydrogencarbonate + L-glutamine + 2 ATP + H2O = carbamoyl phosphate + L-glutamate + 2 ADP + phosphate + 2 H(+)</text>
        <dbReference type="Rhea" id="RHEA:18633"/>
        <dbReference type="ChEBI" id="CHEBI:15377"/>
        <dbReference type="ChEBI" id="CHEBI:15378"/>
        <dbReference type="ChEBI" id="CHEBI:17544"/>
        <dbReference type="ChEBI" id="CHEBI:29985"/>
        <dbReference type="ChEBI" id="CHEBI:30616"/>
        <dbReference type="ChEBI" id="CHEBI:43474"/>
        <dbReference type="ChEBI" id="CHEBI:58228"/>
        <dbReference type="ChEBI" id="CHEBI:58359"/>
        <dbReference type="ChEBI" id="CHEBI:456216"/>
        <dbReference type="EC" id="6.3.5.5"/>
    </reaction>
</comment>
<comment type="catalytic activity">
    <molecule>Carbamoyl phosphate synthase small chain</molecule>
    <reaction evidence="1">
        <text>L-glutamine + H2O = L-glutamate + NH4(+)</text>
        <dbReference type="Rhea" id="RHEA:15889"/>
        <dbReference type="ChEBI" id="CHEBI:15377"/>
        <dbReference type="ChEBI" id="CHEBI:28938"/>
        <dbReference type="ChEBI" id="CHEBI:29985"/>
        <dbReference type="ChEBI" id="CHEBI:58359"/>
    </reaction>
</comment>
<comment type="pathway">
    <text evidence="1">Amino-acid biosynthesis; L-arginine biosynthesis; carbamoyl phosphate from bicarbonate: step 1/1.</text>
</comment>
<comment type="pathway">
    <text evidence="1">Pyrimidine metabolism; UMP biosynthesis via de novo pathway; (S)-dihydroorotate from bicarbonate: step 1/3.</text>
</comment>
<comment type="subunit">
    <text evidence="1">Composed of two chains; the small (or glutamine) chain promotes the hydrolysis of glutamine to ammonia, which is used by the large (or ammonia) chain to synthesize carbamoyl phosphate. Tetramer of heterodimers (alpha,beta)4.</text>
</comment>
<comment type="similarity">
    <text evidence="1">Belongs to the CarA family.</text>
</comment>
<sequence>MTTSTRGAHRTPAVLVLEDGRIFRGRAYGAVGATFGEAVFSTGMTGYQETLTDPSYHRQVVVMTAPHVGNTGINDEDMESRRIWVSGYVVRDPARVPSNWRSTRSLDQELAAQGVVGISGIDTRALTRHLRERGAMRVGIFSGNALPDEGTMLAEVRQTPEMSGADLSAEVATTEAYVVPAIGEKKFTVAAVDLGIKGMTPHRMAERGIEVHVLPATATVDDVYAVEPDGVFFSNGPGDPATADHPVSVMQGVLERGTPLFGICFGNQILGRALGFGTFKLKYGHRGINQPVQDRTTGKVEVTAHNHGFAVDAPLDQVSDTPYGRAEVSHVCLNDNVVEGLQLLDRPAFSVQYHPEAAAGPHDAAYLFDRFVNLMEGQRA</sequence>
<protein>
    <recommendedName>
        <fullName evidence="1">Carbamoyl phosphate synthase small chain</fullName>
        <ecNumber evidence="1">6.3.5.5</ecNumber>
    </recommendedName>
    <alternativeName>
        <fullName evidence="1">Carbamoyl phosphate synthetase glutamine chain</fullName>
    </alternativeName>
</protein>
<keyword id="KW-0028">Amino-acid biosynthesis</keyword>
<keyword id="KW-0055">Arginine biosynthesis</keyword>
<keyword id="KW-0067">ATP-binding</keyword>
<keyword id="KW-0315">Glutamine amidotransferase</keyword>
<keyword id="KW-0436">Ligase</keyword>
<keyword id="KW-0547">Nucleotide-binding</keyword>
<keyword id="KW-0665">Pyrimidine biosynthesis</keyword>
<keyword id="KW-1185">Reference proteome</keyword>
<organism>
    <name type="scientific">Streptomyces coelicolor (strain ATCC BAA-471 / A3(2) / M145)</name>
    <dbReference type="NCBI Taxonomy" id="100226"/>
    <lineage>
        <taxon>Bacteria</taxon>
        <taxon>Bacillati</taxon>
        <taxon>Actinomycetota</taxon>
        <taxon>Actinomycetes</taxon>
        <taxon>Kitasatosporales</taxon>
        <taxon>Streptomycetaceae</taxon>
        <taxon>Streptomyces</taxon>
        <taxon>Streptomyces albidoflavus group</taxon>
    </lineage>
</organism>
<proteinExistence type="inferred from homology"/>
<evidence type="ECO:0000255" key="1">
    <source>
        <dbReference type="HAMAP-Rule" id="MF_01209"/>
    </source>
</evidence>
<reference key="1">
    <citation type="journal article" date="2002" name="Nature">
        <title>Complete genome sequence of the model actinomycete Streptomyces coelicolor A3(2).</title>
        <authorList>
            <person name="Bentley S.D."/>
            <person name="Chater K.F."/>
            <person name="Cerdeno-Tarraga A.-M."/>
            <person name="Challis G.L."/>
            <person name="Thomson N.R."/>
            <person name="James K.D."/>
            <person name="Harris D.E."/>
            <person name="Quail M.A."/>
            <person name="Kieser H."/>
            <person name="Harper D."/>
            <person name="Bateman A."/>
            <person name="Brown S."/>
            <person name="Chandra G."/>
            <person name="Chen C.W."/>
            <person name="Collins M."/>
            <person name="Cronin A."/>
            <person name="Fraser A."/>
            <person name="Goble A."/>
            <person name="Hidalgo J."/>
            <person name="Hornsby T."/>
            <person name="Howarth S."/>
            <person name="Huang C.-H."/>
            <person name="Kieser T."/>
            <person name="Larke L."/>
            <person name="Murphy L.D."/>
            <person name="Oliver K."/>
            <person name="O'Neil S."/>
            <person name="Rabbinowitsch E."/>
            <person name="Rajandream M.A."/>
            <person name="Rutherford K.M."/>
            <person name="Rutter S."/>
            <person name="Seeger K."/>
            <person name="Saunders D."/>
            <person name="Sharp S."/>
            <person name="Squares R."/>
            <person name="Squares S."/>
            <person name="Taylor K."/>
            <person name="Warren T."/>
            <person name="Wietzorrek A."/>
            <person name="Woodward J.R."/>
            <person name="Barrell B.G."/>
            <person name="Parkhill J."/>
            <person name="Hopwood D.A."/>
        </authorList>
    </citation>
    <scope>NUCLEOTIDE SEQUENCE [LARGE SCALE GENOMIC DNA]</scope>
    <source>
        <strain>ATCC BAA-471 / A3(2) / M145</strain>
    </source>
</reference>
<name>CARA_STRCO</name>
<gene>
    <name evidence="1" type="primary">carA</name>
    <name type="synonym">pyrAA</name>
    <name type="ordered locus">SCO1484</name>
    <name type="ORF">SC9C5.08c</name>
</gene>